<evidence type="ECO:0000255" key="1"/>
<evidence type="ECO:0000256" key="2">
    <source>
        <dbReference type="SAM" id="MobiDB-lite"/>
    </source>
</evidence>
<evidence type="ECO:0000269" key="3">
    <source>
    </source>
</evidence>
<evidence type="ECO:0000305" key="4"/>
<evidence type="ECO:0000312" key="5">
    <source>
        <dbReference type="EMBL" id="CAB11130.1"/>
    </source>
</evidence>
<sequence>MNNIYISLYIFFISYIIQLCFNTKYIYCDKKLYVSKNILPSVEKKEFVSNVPHKLEWLVHNILEVVHFLEDVNNYIVDFKKDILTKLEHIVQDDTELYESYEYNENLLNQIYLNNEKKLKRYSEYIEKLKDTKLQMFEDTINNFQRENIYYLNFVYKNLLAKIDLITNLNKKKLDKEKKKNVIELKEYLEDLKKRMFDMQKRLNDIIITKSTFLKNESELNMKLFETSAIDYVNNNSNFEVFSTYIINDFMLNKKRINVLNYDSNLFFKNNFMYFNFLHNYLKEKKDEHVLNVYIYLKDPLIQEYELNYFNYYVVLDLYILDVIIKNVDLLIEKKGKKRKNVNHILVCIDNYVVKYNVLSSNIYLDIQQDIKSFFHESNRNVDGSKIQDMLFHFERKNNSIYQNNMFHDKYYKKKIKKDIKEEKKQNDSLQKYNKNIDPLLFIRKKNIFFDSQKEYYKKFLSSYTYEEIVNILCNKSSRCNNRIFQLINDVNKNTFILKSHLALKNELKKFFQINQNKLLKNKTGVGLINSTKDDINRITNMNLATNTNNAMGNITNDSNIINTNNNNNTSDINNNNTSDINNNNTNNINNNNTNNINNNNTNNINNNTNNTNNNSNNNNNNNIFNNEDSLNKCSAYTYPFSNDAEKNYQENRNQSFSNSDHCFKLLNSIQGANKSSDFINMQNIDDYLNTYYVAYHESFKVVKKEHYYSVISHIFESYLNIDESSNDDDHPIHKKYPHLKGRNVSINFLGQLPEIMKVYKTFRYCDSLNVLAKSYIPKSPASVQSLDKGEDNNDNDEKGESGEDTQVIEKDDSGEDRQMIEKDDSGEDRQMIEKDDSGEDRQMIEKDDSGEDRQMIEKDDSGEDRQMIEKDDSGEDRQMIEKDKSRDDNKAQNNNSTDNEEHDEITEQIGFLKNHNQKYMRLFQKHLLEEIKFINFFEFLVQKKLGVILEKNEFLKLYIFYGQKNLPSMPYTPLFFTCRTIIKIEVLRDVNTNQIIYSSRSFFLETLITLKEYKIKNESAYIVIETTDESSTIKKRLKMDMLHKISPMSHINAYVISNKGKEIVYHKGNIYQRSASDIKNVISDIRNDFLNIILPQYHLFDLFDNYVYIIICLKNENC</sequence>
<dbReference type="EMBL" id="AL844502">
    <property type="protein sequence ID" value="CAB11130.1"/>
    <property type="molecule type" value="Genomic_DNA"/>
</dbReference>
<dbReference type="PIR" id="T18491">
    <property type="entry name" value="T18491"/>
</dbReference>
<dbReference type="RefSeq" id="XP_001351253.1">
    <property type="nucleotide sequence ID" value="XM_001351217.1"/>
</dbReference>
<dbReference type="FunCoup" id="O77374">
    <property type="interactions" value="747"/>
</dbReference>
<dbReference type="STRING" id="36329.O77374"/>
<dbReference type="PaxDb" id="5833-PFC0810c"/>
<dbReference type="EnsemblProtists" id="CAB11130">
    <property type="protein sequence ID" value="CAB11130"/>
    <property type="gene ID" value="PF3D7_0318300"/>
</dbReference>
<dbReference type="KEGG" id="pfa:PF3D7_0318300"/>
<dbReference type="VEuPathDB" id="PlasmoDB:PF3D7_0318300"/>
<dbReference type="HOGENOM" id="CLU_280678_0_0_1"/>
<dbReference type="InParanoid" id="O77374"/>
<dbReference type="OMA" id="HINAYII"/>
<dbReference type="OrthoDB" id="391619at2759"/>
<dbReference type="PhylomeDB" id="O77374"/>
<dbReference type="Proteomes" id="UP000001450">
    <property type="component" value="Chromosome 3"/>
</dbReference>
<dbReference type="PANTHER" id="PTHR37458">
    <property type="entry name" value="THISBE"/>
    <property type="match status" value="1"/>
</dbReference>
<dbReference type="PANTHER" id="PTHR37458:SF1">
    <property type="entry name" value="THISBE"/>
    <property type="match status" value="1"/>
</dbReference>
<name>PF07_PLAF7</name>
<proteinExistence type="evidence at protein level"/>
<feature type="signal peptide" evidence="1">
    <location>
        <begin position="1"/>
        <end position="21"/>
    </location>
</feature>
<feature type="chain" id="PRO_0000374061" description="Uncharacterized protein PFC0810c" evidence="1">
    <location>
        <begin position="22"/>
        <end position="1119"/>
    </location>
</feature>
<feature type="region of interest" description="Disordered" evidence="2">
    <location>
        <begin position="606"/>
        <end position="627"/>
    </location>
</feature>
<feature type="region of interest" description="Disordered" evidence="2">
    <location>
        <begin position="782"/>
        <end position="905"/>
    </location>
</feature>
<feature type="coiled-coil region" evidence="1">
    <location>
        <begin position="170"/>
        <end position="206"/>
    </location>
</feature>
<feature type="coiled-coil region" evidence="1">
    <location>
        <begin position="890"/>
        <end position="920"/>
    </location>
</feature>
<feature type="compositionally biased region" description="Basic and acidic residues" evidence="2">
    <location>
        <begin position="788"/>
        <end position="891"/>
    </location>
</feature>
<accession>O77374</accession>
<gene>
    <name type="ORF">PFC0810c</name>
</gene>
<organism>
    <name type="scientific">Plasmodium falciparum (isolate 3D7)</name>
    <dbReference type="NCBI Taxonomy" id="36329"/>
    <lineage>
        <taxon>Eukaryota</taxon>
        <taxon>Sar</taxon>
        <taxon>Alveolata</taxon>
        <taxon>Apicomplexa</taxon>
        <taxon>Aconoidasida</taxon>
        <taxon>Haemosporida</taxon>
        <taxon>Plasmodiidae</taxon>
        <taxon>Plasmodium</taxon>
        <taxon>Plasmodium (Laverania)</taxon>
    </lineage>
</organism>
<reference key="1">
    <citation type="journal article" date="1999" name="Nature">
        <title>The complete nucleotide sequence of chromosome 3 of Plasmodium falciparum.</title>
        <authorList>
            <person name="Bowman S."/>
            <person name="Lawson D."/>
            <person name="Basham D."/>
            <person name="Brown D."/>
            <person name="Chillingworth T."/>
            <person name="Churcher C.M."/>
            <person name="Craig A."/>
            <person name="Davies R.M."/>
            <person name="Devlin K."/>
            <person name="Feltwell T."/>
            <person name="Gentles S."/>
            <person name="Gwilliam R."/>
            <person name="Hamlin N."/>
            <person name="Harris D."/>
            <person name="Holroyd S."/>
            <person name="Hornsby T."/>
            <person name="Horrocks P."/>
            <person name="Jagels K."/>
            <person name="Jassal B."/>
            <person name="Kyes S."/>
            <person name="McLean J."/>
            <person name="Moule S."/>
            <person name="Mungall K.L."/>
            <person name="Murphy L."/>
            <person name="Oliver K."/>
            <person name="Quail M.A."/>
            <person name="Rajandream M.A."/>
            <person name="Rutter S."/>
            <person name="Skelton J."/>
            <person name="Squares R."/>
            <person name="Squares S."/>
            <person name="Sulston J.E."/>
            <person name="Whitehead S."/>
            <person name="Woodward J.R."/>
            <person name="Newbold C."/>
            <person name="Barrell B.G."/>
        </authorList>
    </citation>
    <scope>NUCLEOTIDE SEQUENCE [LARGE SCALE GENOMIC DNA]</scope>
    <source>
        <strain>3D7</strain>
    </source>
</reference>
<reference key="2">
    <citation type="journal article" date="2002" name="Nature">
        <title>Genome sequence of the human malaria parasite Plasmodium falciparum.</title>
        <authorList>
            <person name="Gardner M.J."/>
            <person name="Hall N."/>
            <person name="Fung E."/>
            <person name="White O."/>
            <person name="Berriman M."/>
            <person name="Hyman R.W."/>
            <person name="Carlton J.M."/>
            <person name="Pain A."/>
            <person name="Nelson K.E."/>
            <person name="Bowman S."/>
            <person name="Paulsen I.T."/>
            <person name="James K.D."/>
            <person name="Eisen J.A."/>
            <person name="Rutherford K.M."/>
            <person name="Salzberg S.L."/>
            <person name="Craig A."/>
            <person name="Kyes S."/>
            <person name="Chan M.-S."/>
            <person name="Nene V."/>
            <person name="Shallom S.J."/>
            <person name="Suh B."/>
            <person name="Peterson J."/>
            <person name="Angiuoli S."/>
            <person name="Pertea M."/>
            <person name="Allen J."/>
            <person name="Selengut J."/>
            <person name="Haft D."/>
            <person name="Mather M.W."/>
            <person name="Vaidya A.B."/>
            <person name="Martin D.M.A."/>
            <person name="Fairlamb A.H."/>
            <person name="Fraunholz M.J."/>
            <person name="Roos D.S."/>
            <person name="Ralph S.A."/>
            <person name="McFadden G.I."/>
            <person name="Cummings L.M."/>
            <person name="Subramanian G.M."/>
            <person name="Mungall C."/>
            <person name="Venter J.C."/>
            <person name="Carucci D.J."/>
            <person name="Hoffman S.L."/>
            <person name="Newbold C."/>
            <person name="Davis R.W."/>
            <person name="Fraser C.M."/>
            <person name="Barrell B.G."/>
        </authorList>
    </citation>
    <scope>NUCLEOTIDE SEQUENCE [LARGE SCALE GENOMIC DNA]</scope>
    <source>
        <strain>3D7</strain>
    </source>
</reference>
<reference evidence="5" key="3">
    <citation type="journal article" date="2002" name="Nature">
        <title>Sequence of Plasmodium falciparum chromosomes 1, 3-9 and 13.</title>
        <authorList>
            <person name="Hall N."/>
            <person name="Pain A."/>
            <person name="Berriman M."/>
            <person name="Churcher C.M."/>
            <person name="Harris B."/>
            <person name="Harris D."/>
            <person name="Mungall K.L."/>
            <person name="Bowman S."/>
            <person name="Atkin R."/>
            <person name="Baker S."/>
            <person name="Barron A."/>
            <person name="Brooks K."/>
            <person name="Buckee C.O."/>
            <person name="Burrows C."/>
            <person name="Cherevach I."/>
            <person name="Chillingworth C."/>
            <person name="Chillingworth T."/>
            <person name="Christodoulou Z."/>
            <person name="Clark L."/>
            <person name="Clark R."/>
            <person name="Corton C."/>
            <person name="Cronin A."/>
            <person name="Davies R.M."/>
            <person name="Davis P."/>
            <person name="Dear P."/>
            <person name="Dearden F."/>
            <person name="Doggett J."/>
            <person name="Feltwell T."/>
            <person name="Goble A."/>
            <person name="Goodhead I."/>
            <person name="Gwilliam R."/>
            <person name="Hamlin N."/>
            <person name="Hance Z."/>
            <person name="Harper D."/>
            <person name="Hauser H."/>
            <person name="Hornsby T."/>
            <person name="Holroyd S."/>
            <person name="Horrocks P."/>
            <person name="Humphray S."/>
            <person name="Jagels K."/>
            <person name="James K.D."/>
            <person name="Johnson D."/>
            <person name="Kerhornou A."/>
            <person name="Knights A."/>
            <person name="Konfortov B."/>
            <person name="Kyes S."/>
            <person name="Larke N."/>
            <person name="Lawson D."/>
            <person name="Lennard N."/>
            <person name="Line A."/>
            <person name="Maddison M."/>
            <person name="Mclean J."/>
            <person name="Mooney P."/>
            <person name="Moule S."/>
            <person name="Murphy L."/>
            <person name="Oliver K."/>
            <person name="Ormond D."/>
            <person name="Price C."/>
            <person name="Quail M.A."/>
            <person name="Rabbinowitsch E."/>
            <person name="Rajandream M.A."/>
            <person name="Rutter S."/>
            <person name="Rutherford K.M."/>
            <person name="Sanders M."/>
            <person name="Simmonds M."/>
            <person name="Seeger K."/>
            <person name="Sharp S."/>
            <person name="Smith R."/>
            <person name="Squares R."/>
            <person name="Squares S."/>
            <person name="Stevens K."/>
            <person name="Taylor K."/>
            <person name="Tivey A."/>
            <person name="Unwin L."/>
            <person name="Whitehead S."/>
            <person name="Woodward J.R."/>
            <person name="Sulston J.E."/>
            <person name="Craig A."/>
            <person name="Newbold C."/>
            <person name="Barrell B.G."/>
        </authorList>
    </citation>
    <scope>NUCLEOTIDE SEQUENCE [LARGE SCALE GENOMIC DNA]</scope>
    <source>
        <strain>3D7</strain>
    </source>
</reference>
<reference evidence="4" key="4">
    <citation type="journal article" date="2007" name="PLoS ONE">
        <title>Rapid identification of malaria vaccine candidates based on alpha-helical coiled coil protein motif.</title>
        <authorList>
            <person name="Villard V."/>
            <person name="Agak G.W."/>
            <person name="Frank G."/>
            <person name="Jafarshad A."/>
            <person name="Servis C."/>
            <person name="Nebie I."/>
            <person name="Sirima S.B."/>
            <person name="Felger I."/>
            <person name="Arevalo-Herrera M."/>
            <person name="Herrera S."/>
            <person name="Heitz F."/>
            <person name="Baecker V."/>
            <person name="Druilhe P."/>
            <person name="Kajava A.V."/>
            <person name="Corradin G."/>
        </authorList>
    </citation>
    <scope>SYNTHESIS OF 180-210</scope>
    <scope>POSSIBLE CANDIDATE MALARIA EPITOPE</scope>
</reference>
<comment type="biotechnology">
    <text evidence="3">Possible candidate for an effective malaria vaccine as determined by epitope response in sera.</text>
</comment>
<protein>
    <recommendedName>
        <fullName evidence="5">Uncharacterized protein PFC0810c</fullName>
    </recommendedName>
</protein>
<keyword id="KW-0175">Coiled coil</keyword>
<keyword id="KW-0477">Merozoite</keyword>
<keyword id="KW-1185">Reference proteome</keyword>
<keyword id="KW-0732">Signal</keyword>